<evidence type="ECO:0000255" key="1">
    <source>
        <dbReference type="HAMAP-Rule" id="MF_01393"/>
    </source>
</evidence>
<accession>B1JFU7</accession>
<reference key="1">
    <citation type="submission" date="2008-02" db="EMBL/GenBank/DDBJ databases">
        <title>Complete sequence of Pseudomonas putida W619.</title>
        <authorList>
            <person name="Copeland A."/>
            <person name="Lucas S."/>
            <person name="Lapidus A."/>
            <person name="Barry K."/>
            <person name="Detter J.C."/>
            <person name="Glavina del Rio T."/>
            <person name="Dalin E."/>
            <person name="Tice H."/>
            <person name="Pitluck S."/>
            <person name="Chain P."/>
            <person name="Malfatti S."/>
            <person name="Shin M."/>
            <person name="Vergez L."/>
            <person name="Schmutz J."/>
            <person name="Larimer F."/>
            <person name="Land M."/>
            <person name="Hauser L."/>
            <person name="Kyrpides N."/>
            <person name="Kim E."/>
            <person name="Taghavi S."/>
            <person name="Vangronsveld D."/>
            <person name="van der Lelie D."/>
            <person name="Richardson P."/>
        </authorList>
    </citation>
    <scope>NUCLEOTIDE SEQUENCE [LARGE SCALE GENOMIC DNA]</scope>
    <source>
        <strain>W619</strain>
    </source>
</reference>
<organism>
    <name type="scientific">Pseudomonas putida (strain W619)</name>
    <dbReference type="NCBI Taxonomy" id="390235"/>
    <lineage>
        <taxon>Bacteria</taxon>
        <taxon>Pseudomonadati</taxon>
        <taxon>Pseudomonadota</taxon>
        <taxon>Gammaproteobacteria</taxon>
        <taxon>Pseudomonadales</taxon>
        <taxon>Pseudomonadaceae</taxon>
        <taxon>Pseudomonas</taxon>
    </lineage>
</organism>
<proteinExistence type="inferred from homology"/>
<gene>
    <name evidence="1" type="primary">atpB</name>
    <name type="ordered locus">PputW619_5206</name>
</gene>
<protein>
    <recommendedName>
        <fullName evidence="1">ATP synthase subunit a</fullName>
    </recommendedName>
    <alternativeName>
        <fullName evidence="1">ATP synthase F0 sector subunit a</fullName>
    </alternativeName>
    <alternativeName>
        <fullName evidence="1">F-ATPase subunit 6</fullName>
    </alternativeName>
</protein>
<sequence>MAAETASGYIQHHLQNLTYGQLPDGSWGFAHSAAEAKAMGFWAFHLDTLGWSVALGLIFLFIFRMAAKKATSGQPGGLQNFVEVMVDFVNGSVKDSFHGRSPVIAPLALTIFVWVFLMNAVDLVPVDWIPQLAILISGDPHIPFRAVSTTDPNATLAMAFCVFALIIFYSIKVKGLGGFIGELTLHPFGSKNIFVQILLIPVNFLLEFVTLIAKPISLALRLFGNMYAGELVFILIAVMFGSGLLWLSGLGVVLQWAWAVFHILIITLQAFIFMMLTIVYLSMAHEDNH</sequence>
<name>ATP6_PSEPW</name>
<keyword id="KW-0066">ATP synthesis</keyword>
<keyword id="KW-0997">Cell inner membrane</keyword>
<keyword id="KW-1003">Cell membrane</keyword>
<keyword id="KW-0138">CF(0)</keyword>
<keyword id="KW-0375">Hydrogen ion transport</keyword>
<keyword id="KW-0406">Ion transport</keyword>
<keyword id="KW-0472">Membrane</keyword>
<keyword id="KW-0812">Transmembrane</keyword>
<keyword id="KW-1133">Transmembrane helix</keyword>
<keyword id="KW-0813">Transport</keyword>
<comment type="function">
    <text evidence="1">Key component of the proton channel; it plays a direct role in the translocation of protons across the membrane.</text>
</comment>
<comment type="subunit">
    <text evidence="1">F-type ATPases have 2 components, CF(1) - the catalytic core - and CF(0) - the membrane proton channel. CF(1) has five subunits: alpha(3), beta(3), gamma(1), delta(1), epsilon(1). CF(0) has three main subunits: a(1), b(2) and c(9-12). The alpha and beta chains form an alternating ring which encloses part of the gamma chain. CF(1) is attached to CF(0) by a central stalk formed by the gamma and epsilon chains, while a peripheral stalk is formed by the delta and b chains.</text>
</comment>
<comment type="subcellular location">
    <subcellularLocation>
        <location evidence="1">Cell inner membrane</location>
        <topology evidence="1">Multi-pass membrane protein</topology>
    </subcellularLocation>
</comment>
<comment type="similarity">
    <text evidence="1">Belongs to the ATPase A chain family.</text>
</comment>
<dbReference type="EMBL" id="CP000949">
    <property type="protein sequence ID" value="ACA75681.1"/>
    <property type="molecule type" value="Genomic_DNA"/>
</dbReference>
<dbReference type="SMR" id="B1JFU7"/>
<dbReference type="STRING" id="390235.PputW619_5206"/>
<dbReference type="KEGG" id="ppw:PputW619_5206"/>
<dbReference type="eggNOG" id="COG0356">
    <property type="taxonomic scope" value="Bacteria"/>
</dbReference>
<dbReference type="HOGENOM" id="CLU_041018_1_0_6"/>
<dbReference type="OrthoDB" id="9789241at2"/>
<dbReference type="GO" id="GO:0005886">
    <property type="term" value="C:plasma membrane"/>
    <property type="evidence" value="ECO:0007669"/>
    <property type="project" value="UniProtKB-SubCell"/>
</dbReference>
<dbReference type="GO" id="GO:0045259">
    <property type="term" value="C:proton-transporting ATP synthase complex"/>
    <property type="evidence" value="ECO:0007669"/>
    <property type="project" value="UniProtKB-KW"/>
</dbReference>
<dbReference type="GO" id="GO:0046933">
    <property type="term" value="F:proton-transporting ATP synthase activity, rotational mechanism"/>
    <property type="evidence" value="ECO:0007669"/>
    <property type="project" value="UniProtKB-UniRule"/>
</dbReference>
<dbReference type="GO" id="GO:0042777">
    <property type="term" value="P:proton motive force-driven plasma membrane ATP synthesis"/>
    <property type="evidence" value="ECO:0007669"/>
    <property type="project" value="TreeGrafter"/>
</dbReference>
<dbReference type="CDD" id="cd00310">
    <property type="entry name" value="ATP-synt_Fo_a_6"/>
    <property type="match status" value="1"/>
</dbReference>
<dbReference type="FunFam" id="1.20.120.220:FF:000002">
    <property type="entry name" value="ATP synthase subunit a"/>
    <property type="match status" value="1"/>
</dbReference>
<dbReference type="Gene3D" id="1.20.120.220">
    <property type="entry name" value="ATP synthase, F0 complex, subunit A"/>
    <property type="match status" value="1"/>
</dbReference>
<dbReference type="HAMAP" id="MF_01393">
    <property type="entry name" value="ATP_synth_a_bact"/>
    <property type="match status" value="1"/>
</dbReference>
<dbReference type="InterPro" id="IPR045082">
    <property type="entry name" value="ATP_syn_F0_a_bact/chloroplast"/>
</dbReference>
<dbReference type="InterPro" id="IPR000568">
    <property type="entry name" value="ATP_synth_F0_asu"/>
</dbReference>
<dbReference type="InterPro" id="IPR023011">
    <property type="entry name" value="ATP_synth_F0_asu_AS"/>
</dbReference>
<dbReference type="InterPro" id="IPR035908">
    <property type="entry name" value="F0_ATP_A_sf"/>
</dbReference>
<dbReference type="NCBIfam" id="TIGR01131">
    <property type="entry name" value="ATP_synt_6_or_A"/>
    <property type="match status" value="1"/>
</dbReference>
<dbReference type="NCBIfam" id="NF004477">
    <property type="entry name" value="PRK05815.1-1"/>
    <property type="match status" value="1"/>
</dbReference>
<dbReference type="PANTHER" id="PTHR42823">
    <property type="entry name" value="ATP SYNTHASE SUBUNIT A, CHLOROPLASTIC"/>
    <property type="match status" value="1"/>
</dbReference>
<dbReference type="PANTHER" id="PTHR42823:SF3">
    <property type="entry name" value="ATP SYNTHASE SUBUNIT A, CHLOROPLASTIC"/>
    <property type="match status" value="1"/>
</dbReference>
<dbReference type="Pfam" id="PF00119">
    <property type="entry name" value="ATP-synt_A"/>
    <property type="match status" value="1"/>
</dbReference>
<dbReference type="SUPFAM" id="SSF81336">
    <property type="entry name" value="F1F0 ATP synthase subunit A"/>
    <property type="match status" value="1"/>
</dbReference>
<dbReference type="PROSITE" id="PS00449">
    <property type="entry name" value="ATPASE_A"/>
    <property type="match status" value="1"/>
</dbReference>
<feature type="chain" id="PRO_0000362399" description="ATP synthase subunit a">
    <location>
        <begin position="1"/>
        <end position="289"/>
    </location>
</feature>
<feature type="transmembrane region" description="Helical" evidence="1">
    <location>
        <begin position="43"/>
        <end position="63"/>
    </location>
</feature>
<feature type="transmembrane region" description="Helical" evidence="1">
    <location>
        <begin position="103"/>
        <end position="123"/>
    </location>
</feature>
<feature type="transmembrane region" description="Helical" evidence="1">
    <location>
        <begin position="160"/>
        <end position="180"/>
    </location>
</feature>
<feature type="transmembrane region" description="Helical" evidence="1">
    <location>
        <begin position="193"/>
        <end position="213"/>
    </location>
</feature>
<feature type="transmembrane region" description="Helical" evidence="1">
    <location>
        <begin position="232"/>
        <end position="252"/>
    </location>
</feature>
<feature type="transmembrane region" description="Helical" evidence="1">
    <location>
        <begin position="259"/>
        <end position="279"/>
    </location>
</feature>